<organism>
    <name type="scientific">Oryza sativa subsp. japonica</name>
    <name type="common">Rice</name>
    <dbReference type="NCBI Taxonomy" id="39947"/>
    <lineage>
        <taxon>Eukaryota</taxon>
        <taxon>Viridiplantae</taxon>
        <taxon>Streptophyta</taxon>
        <taxon>Embryophyta</taxon>
        <taxon>Tracheophyta</taxon>
        <taxon>Spermatophyta</taxon>
        <taxon>Magnoliopsida</taxon>
        <taxon>Liliopsida</taxon>
        <taxon>Poales</taxon>
        <taxon>Poaceae</taxon>
        <taxon>BOP clade</taxon>
        <taxon>Oryzoideae</taxon>
        <taxon>Oryzeae</taxon>
        <taxon>Oryzinae</taxon>
        <taxon>Oryza</taxon>
        <taxon>Oryza sativa</taxon>
    </lineage>
</organism>
<comment type="function">
    <text evidence="1">Component of the cytosolic iron-sulfur (Fe-S) protein assembly (CIA) machinery. Required for the maturation of extramitochondrial Fe-S proteins. Part of an electron transfer chain functioning in an early step of cytosolic Fe-S biogenesis, facilitating the de novo assembly of a [4Fe-4S] cluster on the cytosolic Fe-S scaffold complex. Electrons are transferred from NADPH via a FAD- and FMN-containing diflavin oxidoreductase. Together with the diflavin oxidoreductase, also required for the assembly of the diferric tyrosyl radical cofactor of ribonucleotide reductase (RNR), probably by providing electrons for reduction during radical cofactor maturation in the catalytic small subunit.</text>
</comment>
<comment type="cofactor">
    <cofactor evidence="1">
        <name>[2Fe-2S] cluster</name>
        <dbReference type="ChEBI" id="CHEBI:190135"/>
    </cofactor>
</comment>
<comment type="cofactor">
    <cofactor evidence="1">
        <name>[4Fe-4S] cluster</name>
        <dbReference type="ChEBI" id="CHEBI:49883"/>
    </cofactor>
</comment>
<comment type="subunit">
    <text evidence="1">Monomer.</text>
</comment>
<comment type="subcellular location">
    <subcellularLocation>
        <location evidence="1">Cytoplasm</location>
    </subcellularLocation>
    <subcellularLocation>
        <location evidence="1">Mitochondrion intermembrane space</location>
    </subcellularLocation>
</comment>
<comment type="domain">
    <text evidence="1">The C-terminal domain binds 2 Fe-S clusters but is otherwise mostly in an intrinsically disordered conformation.</text>
</comment>
<comment type="domain">
    <text evidence="1">The N-terminal domain has structural similarity with S-adenosyl-L-methionine-dependent methyltransferases, but does not bind S-adenosyl-L-methionine. It is required for correct assembly of the 2 Fe-S clusters.</text>
</comment>
<comment type="domain">
    <text evidence="1">The twin Cx2C motifs are involved in the recognition by the mitochondrial MIA40-ERV1 disulfide relay system. The formation of 2 disulfide bonds in the Cx2C motifs through dithiol/disulfide exchange reactions effectively traps the protein in the mitochondrial intermembrane space.</text>
</comment>
<comment type="similarity">
    <text evidence="1">Belongs to the anamorsin family.</text>
</comment>
<reference key="1">
    <citation type="journal article" date="2002" name="Nature">
        <title>Sequence and analysis of rice chromosome 4.</title>
        <authorList>
            <person name="Feng Q."/>
            <person name="Zhang Y."/>
            <person name="Hao P."/>
            <person name="Wang S."/>
            <person name="Fu G."/>
            <person name="Huang Y."/>
            <person name="Li Y."/>
            <person name="Zhu J."/>
            <person name="Liu Y."/>
            <person name="Hu X."/>
            <person name="Jia P."/>
            <person name="Zhang Y."/>
            <person name="Zhao Q."/>
            <person name="Ying K."/>
            <person name="Yu S."/>
            <person name="Tang Y."/>
            <person name="Weng Q."/>
            <person name="Zhang L."/>
            <person name="Lu Y."/>
            <person name="Mu J."/>
            <person name="Lu Y."/>
            <person name="Zhang L.S."/>
            <person name="Yu Z."/>
            <person name="Fan D."/>
            <person name="Liu X."/>
            <person name="Lu T."/>
            <person name="Li C."/>
            <person name="Wu Y."/>
            <person name="Sun T."/>
            <person name="Lei H."/>
            <person name="Li T."/>
            <person name="Hu H."/>
            <person name="Guan J."/>
            <person name="Wu M."/>
            <person name="Zhang R."/>
            <person name="Zhou B."/>
            <person name="Chen Z."/>
            <person name="Chen L."/>
            <person name="Jin Z."/>
            <person name="Wang R."/>
            <person name="Yin H."/>
            <person name="Cai Z."/>
            <person name="Ren S."/>
            <person name="Lv G."/>
            <person name="Gu W."/>
            <person name="Zhu G."/>
            <person name="Tu Y."/>
            <person name="Jia J."/>
            <person name="Zhang Y."/>
            <person name="Chen J."/>
            <person name="Kang H."/>
            <person name="Chen X."/>
            <person name="Shao C."/>
            <person name="Sun Y."/>
            <person name="Hu Q."/>
            <person name="Zhang X."/>
            <person name="Zhang W."/>
            <person name="Wang L."/>
            <person name="Ding C."/>
            <person name="Sheng H."/>
            <person name="Gu J."/>
            <person name="Chen S."/>
            <person name="Ni L."/>
            <person name="Zhu F."/>
            <person name="Chen W."/>
            <person name="Lan L."/>
            <person name="Lai Y."/>
            <person name="Cheng Z."/>
            <person name="Gu M."/>
            <person name="Jiang J."/>
            <person name="Li J."/>
            <person name="Hong G."/>
            <person name="Xue Y."/>
            <person name="Han B."/>
        </authorList>
    </citation>
    <scope>NUCLEOTIDE SEQUENCE [LARGE SCALE GENOMIC DNA]</scope>
    <source>
        <strain>cv. Nipponbare</strain>
    </source>
</reference>
<reference key="2">
    <citation type="journal article" date="2005" name="Nature">
        <title>The map-based sequence of the rice genome.</title>
        <authorList>
            <consortium name="International rice genome sequencing project (IRGSP)"/>
        </authorList>
    </citation>
    <scope>NUCLEOTIDE SEQUENCE [LARGE SCALE GENOMIC DNA]</scope>
    <source>
        <strain>cv. Nipponbare</strain>
    </source>
</reference>
<reference key="3">
    <citation type="journal article" date="2008" name="Nucleic Acids Res.">
        <title>The rice annotation project database (RAP-DB): 2008 update.</title>
        <authorList>
            <consortium name="The rice annotation project (RAP)"/>
        </authorList>
    </citation>
    <scope>GENOME REANNOTATION</scope>
    <source>
        <strain>cv. Nipponbare</strain>
    </source>
</reference>
<reference key="4">
    <citation type="journal article" date="2013" name="Rice">
        <title>Improvement of the Oryza sativa Nipponbare reference genome using next generation sequence and optical map data.</title>
        <authorList>
            <person name="Kawahara Y."/>
            <person name="de la Bastide M."/>
            <person name="Hamilton J.P."/>
            <person name="Kanamori H."/>
            <person name="McCombie W.R."/>
            <person name="Ouyang S."/>
            <person name="Schwartz D.C."/>
            <person name="Tanaka T."/>
            <person name="Wu J."/>
            <person name="Zhou S."/>
            <person name="Childs K.L."/>
            <person name="Davidson R.M."/>
            <person name="Lin H."/>
            <person name="Quesada-Ocampo L."/>
            <person name="Vaillancourt B."/>
            <person name="Sakai H."/>
            <person name="Lee S.S."/>
            <person name="Kim J."/>
            <person name="Numa H."/>
            <person name="Itoh T."/>
            <person name="Buell C.R."/>
            <person name="Matsumoto T."/>
        </authorList>
    </citation>
    <scope>GENOME REANNOTATION</scope>
    <source>
        <strain>cv. Nipponbare</strain>
    </source>
</reference>
<reference key="5">
    <citation type="journal article" date="2003" name="Science">
        <title>Collection, mapping, and annotation of over 28,000 cDNA clones from japonica rice.</title>
        <authorList>
            <consortium name="The rice full-length cDNA consortium"/>
        </authorList>
    </citation>
    <scope>NUCLEOTIDE SEQUENCE [LARGE SCALE MRNA]</scope>
    <source>
        <strain>cv. Nipponbare</strain>
    </source>
</reference>
<feature type="chain" id="PRO_0000392338" description="Anamorsin homolog 1">
    <location>
        <begin position="1"/>
        <end position="265"/>
    </location>
</feature>
<feature type="region of interest" description="N-terminal SAM-like domain" evidence="1">
    <location>
        <begin position="1"/>
        <end position="143"/>
    </location>
</feature>
<feature type="region of interest" description="Linker" evidence="1">
    <location>
        <begin position="144"/>
        <end position="175"/>
    </location>
</feature>
<feature type="region of interest" description="Fe-S binding site A" evidence="1">
    <location>
        <begin position="186"/>
        <end position="200"/>
    </location>
</feature>
<feature type="region of interest" description="Fe-S binding site B" evidence="1">
    <location>
        <begin position="226"/>
        <end position="240"/>
    </location>
</feature>
<feature type="short sequence motif" description="Cx2C motif 1" evidence="1">
    <location>
        <begin position="226"/>
        <end position="229"/>
    </location>
</feature>
<feature type="short sequence motif" description="Cx2C motif 2" evidence="1">
    <location>
        <begin position="237"/>
        <end position="240"/>
    </location>
</feature>
<feature type="binding site" evidence="1">
    <location>
        <position position="186"/>
    </location>
    <ligand>
        <name>[2Fe-2S] cluster</name>
        <dbReference type="ChEBI" id="CHEBI:190135"/>
    </ligand>
</feature>
<feature type="binding site" evidence="1">
    <location>
        <position position="195"/>
    </location>
    <ligand>
        <name>[2Fe-2S] cluster</name>
        <dbReference type="ChEBI" id="CHEBI:190135"/>
    </ligand>
</feature>
<feature type="binding site" evidence="1">
    <location>
        <position position="198"/>
    </location>
    <ligand>
        <name>[2Fe-2S] cluster</name>
        <dbReference type="ChEBI" id="CHEBI:190135"/>
    </ligand>
</feature>
<feature type="binding site" evidence="1">
    <location>
        <position position="200"/>
    </location>
    <ligand>
        <name>[2Fe-2S] cluster</name>
        <dbReference type="ChEBI" id="CHEBI:190135"/>
    </ligand>
</feature>
<feature type="binding site" evidence="1">
    <location>
        <position position="226"/>
    </location>
    <ligand>
        <name>[4Fe-4S] cluster</name>
        <dbReference type="ChEBI" id="CHEBI:49883"/>
    </ligand>
</feature>
<feature type="binding site" evidence="1">
    <location>
        <position position="229"/>
    </location>
    <ligand>
        <name>[4Fe-4S] cluster</name>
        <dbReference type="ChEBI" id="CHEBI:49883"/>
    </ligand>
</feature>
<feature type="binding site" evidence="1">
    <location>
        <position position="237"/>
    </location>
    <ligand>
        <name>[4Fe-4S] cluster</name>
        <dbReference type="ChEBI" id="CHEBI:49883"/>
    </ligand>
</feature>
<feature type="binding site" evidence="1">
    <location>
        <position position="240"/>
    </location>
    <ligand>
        <name>[4Fe-4S] cluster</name>
        <dbReference type="ChEBI" id="CHEBI:49883"/>
    </ligand>
</feature>
<sequence length="265" mass="27760">MAATVAEALAVTDELALPLRAVGDLAAAAGVSREEVVVITQCASLGGKLPFDDASVGSVLAVIKKVENLGDLFITEISRVLKAGGMVLIQSSPSDQDPNNSIQRKLLLGGFVDVQASAASSQDSEHSVTIKAKKVSWSLGSSFPLKKATKGLPKIQIDDDSELIDEDSLLTEDDLKKPELPVVGDCEVGATRKACKNCTCGRAEAEEKVEKLNLTSEQINNPQSACGNCGLGDAFRCGTCPYRGLPAFKPGEKIALPGNFLAADM</sequence>
<accession>Q7XQ97</accession>
<accession>A0A0P0WG89</accession>
<keyword id="KW-0001">2Fe-2S</keyword>
<keyword id="KW-0004">4Fe-4S</keyword>
<keyword id="KW-0963">Cytoplasm</keyword>
<keyword id="KW-0408">Iron</keyword>
<keyword id="KW-0411">Iron-sulfur</keyword>
<keyword id="KW-0479">Metal-binding</keyword>
<keyword id="KW-0496">Mitochondrion</keyword>
<keyword id="KW-1185">Reference proteome</keyword>
<proteinExistence type="evidence at transcript level"/>
<protein>
    <recommendedName>
        <fullName evidence="1">Anamorsin homolog 1</fullName>
    </recommendedName>
    <alternativeName>
        <fullName evidence="1">Fe-S cluster assembly protein DRE2 homolog 1</fullName>
    </alternativeName>
</protein>
<evidence type="ECO:0000255" key="1">
    <source>
        <dbReference type="HAMAP-Rule" id="MF_03115"/>
    </source>
</evidence>
<dbReference type="EMBL" id="AL606457">
    <property type="protein sequence ID" value="CAE03236.2"/>
    <property type="molecule type" value="Genomic_DNA"/>
</dbReference>
<dbReference type="EMBL" id="AP008210">
    <property type="protein sequence ID" value="BAF16153.1"/>
    <property type="molecule type" value="Genomic_DNA"/>
</dbReference>
<dbReference type="EMBL" id="AP014960">
    <property type="protein sequence ID" value="BAS91602.1"/>
    <property type="molecule type" value="Genomic_DNA"/>
</dbReference>
<dbReference type="EMBL" id="AK102124">
    <property type="protein sequence ID" value="BAG95398.1"/>
    <property type="molecule type" value="mRNA"/>
</dbReference>
<dbReference type="RefSeq" id="XP_015635834.1">
    <property type="nucleotide sequence ID" value="XM_015780348.1"/>
</dbReference>
<dbReference type="SMR" id="Q7XQ97"/>
<dbReference type="FunCoup" id="Q7XQ97">
    <property type="interactions" value="3093"/>
</dbReference>
<dbReference type="STRING" id="39947.Q7XQ97"/>
<dbReference type="PaxDb" id="39947-Q7XQ97"/>
<dbReference type="EnsemblPlants" id="Os04t0674400-01">
    <property type="protein sequence ID" value="Os04t0674400-01"/>
    <property type="gene ID" value="Os04g0674400"/>
</dbReference>
<dbReference type="Gramene" id="Os04t0674400-01">
    <property type="protein sequence ID" value="Os04t0674400-01"/>
    <property type="gene ID" value="Os04g0674400"/>
</dbReference>
<dbReference type="KEGG" id="dosa:Os04g0674400"/>
<dbReference type="eggNOG" id="KOG4020">
    <property type="taxonomic scope" value="Eukaryota"/>
</dbReference>
<dbReference type="HOGENOM" id="CLU_064393_0_0_1"/>
<dbReference type="InParanoid" id="Q7XQ97"/>
<dbReference type="OMA" id="VVTWAIQ"/>
<dbReference type="OrthoDB" id="311633at2759"/>
<dbReference type="Proteomes" id="UP000000763">
    <property type="component" value="Chromosome 4"/>
</dbReference>
<dbReference type="Proteomes" id="UP000059680">
    <property type="component" value="Chromosome 4"/>
</dbReference>
<dbReference type="GO" id="GO:0005737">
    <property type="term" value="C:cytoplasm"/>
    <property type="evidence" value="ECO:0000318"/>
    <property type="project" value="GO_Central"/>
</dbReference>
<dbReference type="GO" id="GO:0005758">
    <property type="term" value="C:mitochondrial intermembrane space"/>
    <property type="evidence" value="ECO:0007669"/>
    <property type="project" value="UniProtKB-SubCell"/>
</dbReference>
<dbReference type="GO" id="GO:0051537">
    <property type="term" value="F:2 iron, 2 sulfur cluster binding"/>
    <property type="evidence" value="ECO:0007669"/>
    <property type="project" value="UniProtKB-UniRule"/>
</dbReference>
<dbReference type="GO" id="GO:0051539">
    <property type="term" value="F:4 iron, 4 sulfur cluster binding"/>
    <property type="evidence" value="ECO:0007669"/>
    <property type="project" value="UniProtKB-KW"/>
</dbReference>
<dbReference type="GO" id="GO:0009055">
    <property type="term" value="F:electron transfer activity"/>
    <property type="evidence" value="ECO:0007669"/>
    <property type="project" value="UniProtKB-UniRule"/>
</dbReference>
<dbReference type="GO" id="GO:0046872">
    <property type="term" value="F:metal ion binding"/>
    <property type="evidence" value="ECO:0007669"/>
    <property type="project" value="UniProtKB-KW"/>
</dbReference>
<dbReference type="GO" id="GO:0016226">
    <property type="term" value="P:iron-sulfur cluster assembly"/>
    <property type="evidence" value="ECO:0000318"/>
    <property type="project" value="GO_Central"/>
</dbReference>
<dbReference type="FunFam" id="3.40.50.150:FF:000178">
    <property type="entry name" value="Anamorsin homolog"/>
    <property type="match status" value="1"/>
</dbReference>
<dbReference type="Gene3D" id="3.40.50.150">
    <property type="entry name" value="Vaccinia Virus protein VP39"/>
    <property type="match status" value="1"/>
</dbReference>
<dbReference type="HAMAP" id="MF_03115">
    <property type="entry name" value="Anamorsin"/>
    <property type="match status" value="1"/>
</dbReference>
<dbReference type="InterPro" id="IPR007785">
    <property type="entry name" value="Anamorsin"/>
</dbReference>
<dbReference type="InterPro" id="IPR046408">
    <property type="entry name" value="CIAPIN1"/>
</dbReference>
<dbReference type="InterPro" id="IPR029063">
    <property type="entry name" value="SAM-dependent_MTases_sf"/>
</dbReference>
<dbReference type="PANTHER" id="PTHR13273">
    <property type="entry name" value="ANAMORSIN"/>
    <property type="match status" value="1"/>
</dbReference>
<dbReference type="PANTHER" id="PTHR13273:SF14">
    <property type="entry name" value="ANAMORSIN"/>
    <property type="match status" value="1"/>
</dbReference>
<dbReference type="Pfam" id="PF05093">
    <property type="entry name" value="CIAPIN1"/>
    <property type="match status" value="1"/>
</dbReference>
<name>DRE21_ORYSJ</name>
<gene>
    <name type="ordered locus">Os04g0674400</name>
    <name type="ordered locus">LOC_Os04g57810</name>
    <name type="ORF">OSJNBa0018M05.11</name>
</gene>